<gene>
    <name evidence="6" type="primary">MTPAP</name>
    <name evidence="11" type="ORF">CG11418</name>
</gene>
<proteinExistence type="evidence at transcript level"/>
<evidence type="ECO:0000250" key="1">
    <source>
        <dbReference type="UniProtKB" id="O13833"/>
    </source>
</evidence>
<evidence type="ECO:0000250" key="2">
    <source>
        <dbReference type="UniProtKB" id="Q9NVV4"/>
    </source>
</evidence>
<evidence type="ECO:0000255" key="3"/>
<evidence type="ECO:0000256" key="4">
    <source>
        <dbReference type="SAM" id="MobiDB-lite"/>
    </source>
</evidence>
<evidence type="ECO:0000269" key="5">
    <source>
    </source>
</evidence>
<evidence type="ECO:0000303" key="6">
    <source>
    </source>
</evidence>
<evidence type="ECO:0000305" key="7"/>
<evidence type="ECO:0000312" key="8">
    <source>
        <dbReference type="EMBL" id="AAM51142.1"/>
    </source>
</evidence>
<evidence type="ECO:0000312" key="9">
    <source>
        <dbReference type="EMBL" id="AEW48257.1"/>
    </source>
</evidence>
<evidence type="ECO:0000312" key="10">
    <source>
        <dbReference type="EMBL" id="CAA17688.2"/>
    </source>
</evidence>
<evidence type="ECO:0000312" key="11">
    <source>
        <dbReference type="FlyBase" id="FBgn0024360"/>
    </source>
</evidence>
<evidence type="ECO:0000312" key="12">
    <source>
        <dbReference type="Proteomes" id="UP000000803"/>
    </source>
</evidence>
<accession>O46102</accession>
<accession>O46103</accession>
<accession>Q8MRT1</accession>
<feature type="transit peptide" description="Mitochondrion" evidence="3">
    <location>
        <begin position="1"/>
        <end position="57"/>
    </location>
</feature>
<feature type="chain" id="PRO_0000437484" description="Poly(A) RNA polymerase, mitochondrial" evidence="3">
    <location>
        <begin position="58"/>
        <end position="612"/>
    </location>
</feature>
<feature type="domain" description="PAP-associated" evidence="3">
    <location>
        <begin position="427"/>
        <end position="463"/>
    </location>
</feature>
<feature type="region of interest" description="Disordered" evidence="4">
    <location>
        <begin position="555"/>
        <end position="574"/>
    </location>
</feature>
<feature type="region of interest" description="Disordered" evidence="4">
    <location>
        <begin position="588"/>
        <end position="612"/>
    </location>
</feature>
<feature type="binding site" evidence="7">
    <location>
        <begin position="83"/>
        <end position="89"/>
    </location>
    <ligand>
        <name>ATP</name>
        <dbReference type="ChEBI" id="CHEBI:30616"/>
    </ligand>
</feature>
<feature type="binding site" evidence="7">
    <location>
        <begin position="228"/>
        <end position="229"/>
    </location>
    <ligand>
        <name>ATP</name>
        <dbReference type="ChEBI" id="CHEBI:30616"/>
    </ligand>
</feature>
<feature type="binding site" evidence="1">
    <location>
        <position position="230"/>
    </location>
    <ligand>
        <name>Mg(2+)</name>
        <dbReference type="ChEBI" id="CHEBI:18420"/>
        <note>catalytic</note>
    </ligand>
</feature>
<feature type="binding site" evidence="1">
    <location>
        <position position="232"/>
    </location>
    <ligand>
        <name>Mg(2+)</name>
        <dbReference type="ChEBI" id="CHEBI:18420"/>
        <note>catalytic</note>
    </ligand>
</feature>
<feature type="sequence conflict" description="In Ref. 4; AAM51142." evidence="7" ref="4">
    <original>T</original>
    <variation>A</variation>
    <location>
        <position position="90"/>
    </location>
</feature>
<name>PAPD1_DROME</name>
<comment type="function">
    <text evidence="5">Polymerase that creates the 3' poly(A) tail of mitochondrial transcripts. This is not required for transcript stability or translation but may maintain mRNA integrity by protecting 3' termini from degradation.</text>
</comment>
<comment type="catalytic activity">
    <reaction evidence="2">
        <text>RNA(n) + ATP = RNA(n)-3'-adenine ribonucleotide + diphosphate</text>
        <dbReference type="Rhea" id="RHEA:11332"/>
        <dbReference type="Rhea" id="RHEA-COMP:14527"/>
        <dbReference type="Rhea" id="RHEA-COMP:17347"/>
        <dbReference type="ChEBI" id="CHEBI:30616"/>
        <dbReference type="ChEBI" id="CHEBI:33019"/>
        <dbReference type="ChEBI" id="CHEBI:140395"/>
        <dbReference type="ChEBI" id="CHEBI:173115"/>
        <dbReference type="EC" id="2.7.7.19"/>
    </reaction>
</comment>
<comment type="cofactor">
    <cofactor evidence="2">
        <name>Mg(2+)</name>
        <dbReference type="ChEBI" id="CHEBI:18420"/>
    </cofactor>
    <cofactor evidence="2">
        <name>Mn(2+)</name>
        <dbReference type="ChEBI" id="CHEBI:29035"/>
    </cofactor>
</comment>
<comment type="subcellular location">
    <subcellularLocation>
        <location evidence="5">Mitochondrion</location>
    </subcellularLocation>
</comment>
<comment type="disruption phenotype">
    <text evidence="5">Mutant male larvae die at the third instar larval stage with a severe reduction in polyadenylation and increased mitochondrial tRNA levels except for tRNA(Cys) which shows a marked reduction and an accumulation of shortened RNAs. Mutant male larvae show de novo translation of some peptides, suggesting that polyadenylation is not required for translation. They also show reduced assembly and activity of respiratory chain complexes I and V. Heterozygous females are viable and fertile as the gene is X-linked. RNAi-mediated knockdown results in reduced larval body weight, death at the ferrate stage or soon after eclosion and severely reduced polyadenylation in larvae.</text>
</comment>
<comment type="similarity">
    <text evidence="7">Belongs to the DNA polymerase type-B-like family.</text>
</comment>
<keyword id="KW-0067">ATP-binding</keyword>
<keyword id="KW-0460">Magnesium</keyword>
<keyword id="KW-0464">Manganese</keyword>
<keyword id="KW-0479">Metal-binding</keyword>
<keyword id="KW-0496">Mitochondrion</keyword>
<keyword id="KW-0507">mRNA processing</keyword>
<keyword id="KW-0547">Nucleotide-binding</keyword>
<keyword id="KW-0548">Nucleotidyltransferase</keyword>
<keyword id="KW-1185">Reference proteome</keyword>
<keyword id="KW-0694">RNA-binding</keyword>
<keyword id="KW-0808">Transferase</keyword>
<keyword id="KW-0809">Transit peptide</keyword>
<dbReference type="EC" id="2.7.7.19" evidence="2"/>
<dbReference type="EMBL" id="AL022018">
    <property type="protein sequence ID" value="CAA17688.2"/>
    <property type="molecule type" value="Genomic_DNA"/>
</dbReference>
<dbReference type="EMBL" id="AE014298">
    <property type="protein sequence ID" value="AAF45607.1"/>
    <property type="molecule type" value="Genomic_DNA"/>
</dbReference>
<dbReference type="EMBL" id="AE014298">
    <property type="protein sequence ID" value="AGB94975.1"/>
    <property type="molecule type" value="Genomic_DNA"/>
</dbReference>
<dbReference type="EMBL" id="AY119282">
    <property type="protein sequence ID" value="AAM51142.1"/>
    <property type="molecule type" value="mRNA"/>
</dbReference>
<dbReference type="EMBL" id="BT132966">
    <property type="protein sequence ID" value="AEW48257.1"/>
    <property type="molecule type" value="mRNA"/>
</dbReference>
<dbReference type="PIR" id="T13616">
    <property type="entry name" value="T13616"/>
</dbReference>
<dbReference type="RefSeq" id="NP_001259129.1">
    <property type="nucleotide sequence ID" value="NM_001272200.1"/>
</dbReference>
<dbReference type="RefSeq" id="NP_569904.1">
    <property type="nucleotide sequence ID" value="NM_130548.3"/>
</dbReference>
<dbReference type="SMR" id="O46102"/>
<dbReference type="FunCoup" id="O46102">
    <property type="interactions" value="1854"/>
</dbReference>
<dbReference type="IntAct" id="O46102">
    <property type="interactions" value="4"/>
</dbReference>
<dbReference type="STRING" id="7227.FBpp0070227"/>
<dbReference type="GlyGen" id="O46102">
    <property type="glycosylation" value="1 site"/>
</dbReference>
<dbReference type="PaxDb" id="7227-FBpp0070227"/>
<dbReference type="EnsemblMetazoa" id="FBtr0070236">
    <property type="protein sequence ID" value="FBpp0070227"/>
    <property type="gene ID" value="FBgn0024360"/>
</dbReference>
<dbReference type="EnsemblMetazoa" id="FBtr0332288">
    <property type="protein sequence ID" value="FBpp0304567"/>
    <property type="gene ID" value="FBgn0024360"/>
</dbReference>
<dbReference type="GeneID" id="31081"/>
<dbReference type="KEGG" id="dme:Dmel_CG11418"/>
<dbReference type="UCSC" id="CG11418-RA">
    <property type="organism name" value="d. melanogaster"/>
</dbReference>
<dbReference type="AGR" id="FB:FBgn0024360"/>
<dbReference type="CTD" id="55149"/>
<dbReference type="FlyBase" id="FBgn0024360">
    <property type="gene designation" value="MTPAP"/>
</dbReference>
<dbReference type="VEuPathDB" id="VectorBase:FBgn0024360"/>
<dbReference type="eggNOG" id="KOG2277">
    <property type="taxonomic scope" value="Eukaryota"/>
</dbReference>
<dbReference type="GeneTree" id="ENSGT00940000158582"/>
<dbReference type="HOGENOM" id="CLU_018757_2_0_1"/>
<dbReference type="InParanoid" id="O46102"/>
<dbReference type="OMA" id="LRFDNDM"/>
<dbReference type="OrthoDB" id="434989at2759"/>
<dbReference type="PhylomeDB" id="O46102"/>
<dbReference type="SignaLink" id="O46102"/>
<dbReference type="BioGRID-ORCS" id="31081">
    <property type="hits" value="0 hits in 1 CRISPR screen"/>
</dbReference>
<dbReference type="ChiTaRS" id="CG11418">
    <property type="organism name" value="fly"/>
</dbReference>
<dbReference type="GenomeRNAi" id="31081"/>
<dbReference type="PRO" id="PR:O46102"/>
<dbReference type="Proteomes" id="UP000000803">
    <property type="component" value="Chromosome X"/>
</dbReference>
<dbReference type="Bgee" id="FBgn0024360">
    <property type="expression patterns" value="Expressed in secondary oocyte and 43 other cell types or tissues"/>
</dbReference>
<dbReference type="ExpressionAtlas" id="O46102">
    <property type="expression patterns" value="baseline and differential"/>
</dbReference>
<dbReference type="GO" id="GO:0005739">
    <property type="term" value="C:mitochondrion"/>
    <property type="evidence" value="ECO:0000314"/>
    <property type="project" value="UniProtKB"/>
</dbReference>
<dbReference type="GO" id="GO:0005524">
    <property type="term" value="F:ATP binding"/>
    <property type="evidence" value="ECO:0007669"/>
    <property type="project" value="UniProtKB-KW"/>
</dbReference>
<dbReference type="GO" id="GO:0046872">
    <property type="term" value="F:metal ion binding"/>
    <property type="evidence" value="ECO:0007669"/>
    <property type="project" value="UniProtKB-KW"/>
</dbReference>
<dbReference type="GO" id="GO:1990817">
    <property type="term" value="F:poly(A) RNA polymerase activity"/>
    <property type="evidence" value="ECO:0000315"/>
    <property type="project" value="FlyBase"/>
</dbReference>
<dbReference type="GO" id="GO:0003723">
    <property type="term" value="F:RNA binding"/>
    <property type="evidence" value="ECO:0000250"/>
    <property type="project" value="FlyBase"/>
</dbReference>
<dbReference type="GO" id="GO:0090616">
    <property type="term" value="P:mitochondrial mRNA 3'-end processing"/>
    <property type="evidence" value="ECO:0000315"/>
    <property type="project" value="FlyBase"/>
</dbReference>
<dbReference type="GO" id="GO:0097222">
    <property type="term" value="P:mitochondrial mRNA polyadenylation"/>
    <property type="evidence" value="ECO:0000315"/>
    <property type="project" value="UniProtKB"/>
</dbReference>
<dbReference type="GO" id="GO:0031123">
    <property type="term" value="P:RNA 3'-end processing"/>
    <property type="evidence" value="ECO:0000318"/>
    <property type="project" value="GO_Central"/>
</dbReference>
<dbReference type="GO" id="GO:0036416">
    <property type="term" value="P:tRNA stabilization"/>
    <property type="evidence" value="ECO:0000315"/>
    <property type="project" value="UniProtKB"/>
</dbReference>
<dbReference type="CDD" id="cd05402">
    <property type="entry name" value="NT_PAP_TUTase"/>
    <property type="match status" value="1"/>
</dbReference>
<dbReference type="FunFam" id="1.10.1410.10:FF:000045">
    <property type="entry name" value="poly(A) RNA polymerase, mitochondrial"/>
    <property type="match status" value="1"/>
</dbReference>
<dbReference type="Gene3D" id="1.10.1410.10">
    <property type="match status" value="1"/>
</dbReference>
<dbReference type="Gene3D" id="3.30.460.10">
    <property type="entry name" value="Beta Polymerase, domain 2"/>
    <property type="match status" value="1"/>
</dbReference>
<dbReference type="InterPro" id="IPR054708">
    <property type="entry name" value="MTPAP-like_central"/>
</dbReference>
<dbReference type="InterPro" id="IPR043519">
    <property type="entry name" value="NT_sf"/>
</dbReference>
<dbReference type="InterPro" id="IPR002058">
    <property type="entry name" value="PAP_assoc"/>
</dbReference>
<dbReference type="PANTHER" id="PTHR12271">
    <property type="entry name" value="POLY A POLYMERASE CID PAP -RELATED"/>
    <property type="match status" value="1"/>
</dbReference>
<dbReference type="PANTHER" id="PTHR12271:SF133">
    <property type="entry name" value="POLY(A) RNA POLYMERASE, MITOCHONDRIAL"/>
    <property type="match status" value="1"/>
</dbReference>
<dbReference type="Pfam" id="PF22600">
    <property type="entry name" value="MTPAP-like_central"/>
    <property type="match status" value="1"/>
</dbReference>
<dbReference type="Pfam" id="PF03828">
    <property type="entry name" value="PAP_assoc"/>
    <property type="match status" value="1"/>
</dbReference>
<dbReference type="SUPFAM" id="SSF81301">
    <property type="entry name" value="Nucleotidyltransferase"/>
    <property type="match status" value="1"/>
</dbReference>
<dbReference type="SUPFAM" id="SSF81631">
    <property type="entry name" value="PAP/OAS1 substrate-binding domain"/>
    <property type="match status" value="1"/>
</dbReference>
<sequence>MNSLVRRSAQQLSLWRTYCIKHNASEAASPGRNAGRPNYEEFIGRHQRQAQCSIVVQVSSEKSYEELYNYCSSFGSIMGAHHYCVRQDETLHYILLEYATSDEAAAAIGAGVTNGELSGVPVRSPFLWFRAAGGGRRSPKLVANTAPALLSLDGTRQVDQRHLLGLLRGAADIEEQVQQLYEHTRLNELGIRMRFLAALQVQQAIAGMFPAAQAQPFGSSVNGFGRMGCDLDLILRFDSDMGAKIPLEAAVPSRLVYHTKENLSNGRSQTQRHMECFGDMLHLFLPGVCHVRRILQARVPIIKYHHEHLDLEVDLSMSNLTGFYMSELLYMFGEMDPRVRPLTFTIRRWAQTCGLTNPSPGRWISNFSLTCLVMFFLQQLRQPILPTIGALAKAAEPGDSRVTEDGINCTFTRNVDRLGFRSRNQSSLSELLLQFFEFYSQFDFHNRAISLNEGKPLSKPDHSAMYIVNPLEQLLNVSKNVSLEECERLRIEVRNAAWVLESEVENASVPEGDGQELSCGLLNLFKHPEKAVIRPNMFFKPRMVEVSDLFEQKEAGATSSSTPPTPAITYKSASVRQQVQSIKAATRSELKQLRGSGSSVPTSSPNNRRRSR</sequence>
<protein>
    <recommendedName>
        <fullName evidence="6">Poly(A) RNA polymerase, mitochondrial</fullName>
        <shortName evidence="6">DmMTPAP</shortName>
        <ecNumber evidence="2">2.7.7.19</ecNumber>
    </recommendedName>
</protein>
<reference evidence="10" key="1">
    <citation type="journal article" date="2000" name="Science">
        <title>From sequence to chromosome: the tip of the X chromosome of D. melanogaster.</title>
        <authorList>
            <person name="Benos P.V."/>
            <person name="Gatt M.K."/>
            <person name="Ashburner M."/>
            <person name="Murphy L."/>
            <person name="Harris D."/>
            <person name="Barrell B.G."/>
            <person name="Ferraz C."/>
            <person name="Vidal S."/>
            <person name="Brun C."/>
            <person name="Demailles J."/>
            <person name="Cadieu E."/>
            <person name="Dreano S."/>
            <person name="Gloux S."/>
            <person name="Lelaure V."/>
            <person name="Mottier S."/>
            <person name="Galibert F."/>
            <person name="Borkova D."/>
            <person name="Minana B."/>
            <person name="Kafatos F.C."/>
            <person name="Louis C."/>
            <person name="Siden-Kiamos I."/>
            <person name="Bolshakov S."/>
            <person name="Papagiannakis G."/>
            <person name="Spanos L."/>
            <person name="Cox S."/>
            <person name="Madueno E."/>
            <person name="de Pablos B."/>
            <person name="Modolell J."/>
            <person name="Peter A."/>
            <person name="Schoettler P."/>
            <person name="Werner M."/>
            <person name="Mourkioti F."/>
            <person name="Beinert N."/>
            <person name="Dowe G."/>
            <person name="Schaefer U."/>
            <person name="Jaeckle H."/>
            <person name="Bucheton A."/>
            <person name="Callister D.M."/>
            <person name="Campbell L.A."/>
            <person name="Darlamitsou A."/>
            <person name="Henderson N.S."/>
            <person name="McMillan P.J."/>
            <person name="Salles C."/>
            <person name="Tait E.A."/>
            <person name="Valenti P."/>
            <person name="Saunders R.D.C."/>
            <person name="Glover D.M."/>
        </authorList>
    </citation>
    <scope>NUCLEOTIDE SEQUENCE [LARGE SCALE GENOMIC DNA]</scope>
    <source>
        <strain evidence="10">Oregon-R</strain>
    </source>
</reference>
<reference evidence="12" key="2">
    <citation type="journal article" date="2000" name="Science">
        <title>The genome sequence of Drosophila melanogaster.</title>
        <authorList>
            <person name="Adams M.D."/>
            <person name="Celniker S.E."/>
            <person name="Holt R.A."/>
            <person name="Evans C.A."/>
            <person name="Gocayne J.D."/>
            <person name="Amanatides P.G."/>
            <person name="Scherer S.E."/>
            <person name="Li P.W."/>
            <person name="Hoskins R.A."/>
            <person name="Galle R.F."/>
            <person name="George R.A."/>
            <person name="Lewis S.E."/>
            <person name="Richards S."/>
            <person name="Ashburner M."/>
            <person name="Henderson S.N."/>
            <person name="Sutton G.G."/>
            <person name="Wortman J.R."/>
            <person name="Yandell M.D."/>
            <person name="Zhang Q."/>
            <person name="Chen L.X."/>
            <person name="Brandon R.C."/>
            <person name="Rogers Y.-H.C."/>
            <person name="Blazej R.G."/>
            <person name="Champe M."/>
            <person name="Pfeiffer B.D."/>
            <person name="Wan K.H."/>
            <person name="Doyle C."/>
            <person name="Baxter E.G."/>
            <person name="Helt G."/>
            <person name="Nelson C.R."/>
            <person name="Miklos G.L.G."/>
            <person name="Abril J.F."/>
            <person name="Agbayani A."/>
            <person name="An H.-J."/>
            <person name="Andrews-Pfannkoch C."/>
            <person name="Baldwin D."/>
            <person name="Ballew R.M."/>
            <person name="Basu A."/>
            <person name="Baxendale J."/>
            <person name="Bayraktaroglu L."/>
            <person name="Beasley E.M."/>
            <person name="Beeson K.Y."/>
            <person name="Benos P.V."/>
            <person name="Berman B.P."/>
            <person name="Bhandari D."/>
            <person name="Bolshakov S."/>
            <person name="Borkova D."/>
            <person name="Botchan M.R."/>
            <person name="Bouck J."/>
            <person name="Brokstein P."/>
            <person name="Brottier P."/>
            <person name="Burtis K.C."/>
            <person name="Busam D.A."/>
            <person name="Butler H."/>
            <person name="Cadieu E."/>
            <person name="Center A."/>
            <person name="Chandra I."/>
            <person name="Cherry J.M."/>
            <person name="Cawley S."/>
            <person name="Dahlke C."/>
            <person name="Davenport L.B."/>
            <person name="Davies P."/>
            <person name="de Pablos B."/>
            <person name="Delcher A."/>
            <person name="Deng Z."/>
            <person name="Mays A.D."/>
            <person name="Dew I."/>
            <person name="Dietz S.M."/>
            <person name="Dodson K."/>
            <person name="Doup L.E."/>
            <person name="Downes M."/>
            <person name="Dugan-Rocha S."/>
            <person name="Dunkov B.C."/>
            <person name="Dunn P."/>
            <person name="Durbin K.J."/>
            <person name="Evangelista C.C."/>
            <person name="Ferraz C."/>
            <person name="Ferriera S."/>
            <person name="Fleischmann W."/>
            <person name="Fosler C."/>
            <person name="Gabrielian A.E."/>
            <person name="Garg N.S."/>
            <person name="Gelbart W.M."/>
            <person name="Glasser K."/>
            <person name="Glodek A."/>
            <person name="Gong F."/>
            <person name="Gorrell J.H."/>
            <person name="Gu Z."/>
            <person name="Guan P."/>
            <person name="Harris M."/>
            <person name="Harris N.L."/>
            <person name="Harvey D.A."/>
            <person name="Heiman T.J."/>
            <person name="Hernandez J.R."/>
            <person name="Houck J."/>
            <person name="Hostin D."/>
            <person name="Houston K.A."/>
            <person name="Howland T.J."/>
            <person name="Wei M.-H."/>
            <person name="Ibegwam C."/>
            <person name="Jalali M."/>
            <person name="Kalush F."/>
            <person name="Karpen G.H."/>
            <person name="Ke Z."/>
            <person name="Kennison J.A."/>
            <person name="Ketchum K.A."/>
            <person name="Kimmel B.E."/>
            <person name="Kodira C.D."/>
            <person name="Kraft C.L."/>
            <person name="Kravitz S."/>
            <person name="Kulp D."/>
            <person name="Lai Z."/>
            <person name="Lasko P."/>
            <person name="Lei Y."/>
            <person name="Levitsky A.A."/>
            <person name="Li J.H."/>
            <person name="Li Z."/>
            <person name="Liang Y."/>
            <person name="Lin X."/>
            <person name="Liu X."/>
            <person name="Mattei B."/>
            <person name="McIntosh T.C."/>
            <person name="McLeod M.P."/>
            <person name="McPherson D."/>
            <person name="Merkulov G."/>
            <person name="Milshina N.V."/>
            <person name="Mobarry C."/>
            <person name="Morris J."/>
            <person name="Moshrefi A."/>
            <person name="Mount S.M."/>
            <person name="Moy M."/>
            <person name="Murphy B."/>
            <person name="Murphy L."/>
            <person name="Muzny D.M."/>
            <person name="Nelson D.L."/>
            <person name="Nelson D.R."/>
            <person name="Nelson K.A."/>
            <person name="Nixon K."/>
            <person name="Nusskern D.R."/>
            <person name="Pacleb J.M."/>
            <person name="Palazzolo M."/>
            <person name="Pittman G.S."/>
            <person name="Pan S."/>
            <person name="Pollard J."/>
            <person name="Puri V."/>
            <person name="Reese M.G."/>
            <person name="Reinert K."/>
            <person name="Remington K."/>
            <person name="Saunders R.D.C."/>
            <person name="Scheeler F."/>
            <person name="Shen H."/>
            <person name="Shue B.C."/>
            <person name="Siden-Kiamos I."/>
            <person name="Simpson M."/>
            <person name="Skupski M.P."/>
            <person name="Smith T.J."/>
            <person name="Spier E."/>
            <person name="Spradling A.C."/>
            <person name="Stapleton M."/>
            <person name="Strong R."/>
            <person name="Sun E."/>
            <person name="Svirskas R."/>
            <person name="Tector C."/>
            <person name="Turner R."/>
            <person name="Venter E."/>
            <person name="Wang A.H."/>
            <person name="Wang X."/>
            <person name="Wang Z.-Y."/>
            <person name="Wassarman D.A."/>
            <person name="Weinstock G.M."/>
            <person name="Weissenbach J."/>
            <person name="Williams S.M."/>
            <person name="Woodage T."/>
            <person name="Worley K.C."/>
            <person name="Wu D."/>
            <person name="Yang S."/>
            <person name="Yao Q.A."/>
            <person name="Ye J."/>
            <person name="Yeh R.-F."/>
            <person name="Zaveri J.S."/>
            <person name="Zhan M."/>
            <person name="Zhang G."/>
            <person name="Zhao Q."/>
            <person name="Zheng L."/>
            <person name="Zheng X.H."/>
            <person name="Zhong F.N."/>
            <person name="Zhong W."/>
            <person name="Zhou X."/>
            <person name="Zhu S.C."/>
            <person name="Zhu X."/>
            <person name="Smith H.O."/>
            <person name="Gibbs R.A."/>
            <person name="Myers E.W."/>
            <person name="Rubin G.M."/>
            <person name="Venter J.C."/>
        </authorList>
    </citation>
    <scope>NUCLEOTIDE SEQUENCE [LARGE SCALE GENOMIC DNA]</scope>
    <source>
        <strain evidence="12">Berkeley</strain>
    </source>
</reference>
<reference evidence="12" key="3">
    <citation type="journal article" date="2002" name="Genome Biol.">
        <title>Annotation of the Drosophila melanogaster euchromatic genome: a systematic review.</title>
        <authorList>
            <person name="Misra S."/>
            <person name="Crosby M.A."/>
            <person name="Mungall C.J."/>
            <person name="Matthews B.B."/>
            <person name="Campbell K.S."/>
            <person name="Hradecky P."/>
            <person name="Huang Y."/>
            <person name="Kaminker J.S."/>
            <person name="Millburn G.H."/>
            <person name="Prochnik S.E."/>
            <person name="Smith C.D."/>
            <person name="Tupy J.L."/>
            <person name="Whitfield E.J."/>
            <person name="Bayraktaroglu L."/>
            <person name="Berman B.P."/>
            <person name="Bettencourt B.R."/>
            <person name="Celniker S.E."/>
            <person name="de Grey A.D.N.J."/>
            <person name="Drysdale R.A."/>
            <person name="Harris N.L."/>
            <person name="Richter J."/>
            <person name="Russo S."/>
            <person name="Schroeder A.J."/>
            <person name="Shu S.Q."/>
            <person name="Stapleton M."/>
            <person name="Yamada C."/>
            <person name="Ashburner M."/>
            <person name="Gelbart W.M."/>
            <person name="Rubin G.M."/>
            <person name="Lewis S.E."/>
        </authorList>
    </citation>
    <scope>GENOME REANNOTATION</scope>
    <source>
        <strain evidence="12">Berkeley</strain>
    </source>
</reference>
<reference evidence="8" key="4">
    <citation type="journal article" date="2002" name="Genome Biol.">
        <title>A Drosophila full-length cDNA resource.</title>
        <authorList>
            <person name="Stapleton M."/>
            <person name="Carlson J.W."/>
            <person name="Brokstein P."/>
            <person name="Yu C."/>
            <person name="Champe M."/>
            <person name="George R.A."/>
            <person name="Guarin H."/>
            <person name="Kronmiller B."/>
            <person name="Pacleb J.M."/>
            <person name="Park S."/>
            <person name="Wan K.H."/>
            <person name="Rubin G.M."/>
            <person name="Celniker S.E."/>
        </authorList>
    </citation>
    <scope>NUCLEOTIDE SEQUENCE [LARGE SCALE MRNA]</scope>
    <source>
        <strain evidence="8">Berkeley</strain>
        <tissue evidence="8">Embryo</tissue>
    </source>
</reference>
<reference evidence="9" key="5">
    <citation type="submission" date="2011-12" db="EMBL/GenBank/DDBJ databases">
        <authorList>
            <person name="Carlson J."/>
            <person name="Booth B."/>
            <person name="Frise E."/>
            <person name="Park S."/>
            <person name="Wan K."/>
            <person name="Yu C."/>
            <person name="Celniker S."/>
        </authorList>
    </citation>
    <scope>NUCLEOTIDE SEQUENCE [LARGE SCALE MRNA]</scope>
    <source>
        <strain evidence="9">Berkeley</strain>
    </source>
</reference>
<reference evidence="7" key="6">
    <citation type="journal article" date="2016" name="PLoS Genet.">
        <title>Mitochondrial polyadenylation is a one-step process required for mRNA integrity and tRNA maturation.</title>
        <authorList>
            <person name="Bratic A."/>
            <person name="Clemente P."/>
            <person name="Calvo-Garrido J."/>
            <person name="Maffezzini C."/>
            <person name="Felser A."/>
            <person name="Wibom R."/>
            <person name="Wedell A."/>
            <person name="Freyer C."/>
            <person name="Wredenberg A."/>
        </authorList>
    </citation>
    <scope>FUNCTION</scope>
    <scope>SUBCELLULAR LOCATION</scope>
    <scope>DISRUPTION PHENOTYPE</scope>
</reference>
<organism evidence="12">
    <name type="scientific">Drosophila melanogaster</name>
    <name type="common">Fruit fly</name>
    <dbReference type="NCBI Taxonomy" id="7227"/>
    <lineage>
        <taxon>Eukaryota</taxon>
        <taxon>Metazoa</taxon>
        <taxon>Ecdysozoa</taxon>
        <taxon>Arthropoda</taxon>
        <taxon>Hexapoda</taxon>
        <taxon>Insecta</taxon>
        <taxon>Pterygota</taxon>
        <taxon>Neoptera</taxon>
        <taxon>Endopterygota</taxon>
        <taxon>Diptera</taxon>
        <taxon>Brachycera</taxon>
        <taxon>Muscomorpha</taxon>
        <taxon>Ephydroidea</taxon>
        <taxon>Drosophilidae</taxon>
        <taxon>Drosophila</taxon>
        <taxon>Sophophora</taxon>
    </lineage>
</organism>